<organism>
    <name type="scientific">Renibacterium salmoninarum (strain ATCC 33209 / DSM 20767 / JCM 11484 / NBRC 15589 / NCIMB 2235)</name>
    <dbReference type="NCBI Taxonomy" id="288705"/>
    <lineage>
        <taxon>Bacteria</taxon>
        <taxon>Bacillati</taxon>
        <taxon>Actinomycetota</taxon>
        <taxon>Actinomycetes</taxon>
        <taxon>Micrococcales</taxon>
        <taxon>Micrococcaceae</taxon>
        <taxon>Renibacterium</taxon>
    </lineage>
</organism>
<comment type="catalytic activity">
    <reaction evidence="1">
        <text>(6S)-5,6,7,8-tetrahydrofolate + formate + ATP = (6R)-10-formyltetrahydrofolate + ADP + phosphate</text>
        <dbReference type="Rhea" id="RHEA:20221"/>
        <dbReference type="ChEBI" id="CHEBI:15740"/>
        <dbReference type="ChEBI" id="CHEBI:30616"/>
        <dbReference type="ChEBI" id="CHEBI:43474"/>
        <dbReference type="ChEBI" id="CHEBI:57453"/>
        <dbReference type="ChEBI" id="CHEBI:195366"/>
        <dbReference type="ChEBI" id="CHEBI:456216"/>
        <dbReference type="EC" id="6.3.4.3"/>
    </reaction>
</comment>
<comment type="pathway">
    <text evidence="1">One-carbon metabolism; tetrahydrofolate interconversion.</text>
</comment>
<comment type="similarity">
    <text evidence="1">Belongs to the formate--tetrahydrofolate ligase family.</text>
</comment>
<protein>
    <recommendedName>
        <fullName evidence="1">Formate--tetrahydrofolate ligase</fullName>
        <ecNumber evidence="1">6.3.4.3</ecNumber>
    </recommendedName>
    <alternativeName>
        <fullName evidence="1">Formyltetrahydrofolate synthetase</fullName>
        <shortName evidence="1">FHS</shortName>
        <shortName evidence="1">FTHFS</shortName>
    </alternativeName>
</protein>
<dbReference type="EC" id="6.3.4.3" evidence="1"/>
<dbReference type="EMBL" id="CP000910">
    <property type="protein sequence ID" value="ABY23446.1"/>
    <property type="molecule type" value="Genomic_DNA"/>
</dbReference>
<dbReference type="RefSeq" id="WP_012245119.1">
    <property type="nucleotide sequence ID" value="NC_010168.1"/>
</dbReference>
<dbReference type="SMR" id="A9WMW3"/>
<dbReference type="STRING" id="288705.RSal33209_1710"/>
<dbReference type="KEGG" id="rsa:RSal33209_1710"/>
<dbReference type="eggNOG" id="COG2759">
    <property type="taxonomic scope" value="Bacteria"/>
</dbReference>
<dbReference type="HOGENOM" id="CLU_003601_3_3_11"/>
<dbReference type="UniPathway" id="UPA00193"/>
<dbReference type="Proteomes" id="UP000002007">
    <property type="component" value="Chromosome"/>
</dbReference>
<dbReference type="GO" id="GO:0005524">
    <property type="term" value="F:ATP binding"/>
    <property type="evidence" value="ECO:0007669"/>
    <property type="project" value="UniProtKB-UniRule"/>
</dbReference>
<dbReference type="GO" id="GO:0004329">
    <property type="term" value="F:formate-tetrahydrofolate ligase activity"/>
    <property type="evidence" value="ECO:0007669"/>
    <property type="project" value="UniProtKB-UniRule"/>
</dbReference>
<dbReference type="GO" id="GO:0035999">
    <property type="term" value="P:tetrahydrofolate interconversion"/>
    <property type="evidence" value="ECO:0007669"/>
    <property type="project" value="UniProtKB-UniRule"/>
</dbReference>
<dbReference type="CDD" id="cd00477">
    <property type="entry name" value="FTHFS"/>
    <property type="match status" value="1"/>
</dbReference>
<dbReference type="FunFam" id="3.30.1510.10:FF:000001">
    <property type="entry name" value="Formate--tetrahydrofolate ligase"/>
    <property type="match status" value="1"/>
</dbReference>
<dbReference type="FunFam" id="3.10.410.10:FF:000001">
    <property type="entry name" value="Putative formate--tetrahydrofolate ligase"/>
    <property type="match status" value="1"/>
</dbReference>
<dbReference type="Gene3D" id="3.30.1510.10">
    <property type="entry name" value="Domain 2, N(10)-formyltetrahydrofolate synthetase"/>
    <property type="match status" value="1"/>
</dbReference>
<dbReference type="Gene3D" id="3.10.410.10">
    <property type="entry name" value="Formyltetrahydrofolate synthetase, domain 3"/>
    <property type="match status" value="1"/>
</dbReference>
<dbReference type="Gene3D" id="3.40.50.300">
    <property type="entry name" value="P-loop containing nucleotide triphosphate hydrolases"/>
    <property type="match status" value="1"/>
</dbReference>
<dbReference type="HAMAP" id="MF_01543">
    <property type="entry name" value="FTHFS"/>
    <property type="match status" value="1"/>
</dbReference>
<dbReference type="InterPro" id="IPR000559">
    <property type="entry name" value="Formate_THF_ligase"/>
</dbReference>
<dbReference type="InterPro" id="IPR020628">
    <property type="entry name" value="Formate_THF_ligase_CS"/>
</dbReference>
<dbReference type="InterPro" id="IPR027417">
    <property type="entry name" value="P-loop_NTPase"/>
</dbReference>
<dbReference type="NCBIfam" id="NF010030">
    <property type="entry name" value="PRK13505.1"/>
    <property type="match status" value="1"/>
</dbReference>
<dbReference type="Pfam" id="PF01268">
    <property type="entry name" value="FTHFS"/>
    <property type="match status" value="1"/>
</dbReference>
<dbReference type="SUPFAM" id="SSF52540">
    <property type="entry name" value="P-loop containing nucleoside triphosphate hydrolases"/>
    <property type="match status" value="1"/>
</dbReference>
<dbReference type="PROSITE" id="PS00721">
    <property type="entry name" value="FTHFS_1"/>
    <property type="match status" value="1"/>
</dbReference>
<dbReference type="PROSITE" id="PS00722">
    <property type="entry name" value="FTHFS_2"/>
    <property type="match status" value="1"/>
</dbReference>
<evidence type="ECO:0000255" key="1">
    <source>
        <dbReference type="HAMAP-Rule" id="MF_01543"/>
    </source>
</evidence>
<reference key="1">
    <citation type="journal article" date="2008" name="J. Bacteriol.">
        <title>Genome sequence of the fish pathogen Renibacterium salmoninarum suggests reductive evolution away from an environmental Arthrobacter ancestor.</title>
        <authorList>
            <person name="Wiens G.D."/>
            <person name="Rockey D.D."/>
            <person name="Wu Z."/>
            <person name="Chang J."/>
            <person name="Levy R."/>
            <person name="Crane S."/>
            <person name="Chen D.S."/>
            <person name="Capri G.R."/>
            <person name="Burnett J.R."/>
            <person name="Sudheesh P.S."/>
            <person name="Schipma M.J."/>
            <person name="Burd H."/>
            <person name="Bhattacharyya A."/>
            <person name="Rhodes L.D."/>
            <person name="Kaul R."/>
            <person name="Strom M.S."/>
        </authorList>
    </citation>
    <scope>NUCLEOTIDE SEQUENCE [LARGE SCALE GENOMIC DNA]</scope>
    <source>
        <strain>ATCC 33209 / DSM 20767 / JCM 11484 / NBRC 15589 / NCIMB 2235</strain>
    </source>
</reference>
<keyword id="KW-0067">ATP-binding</keyword>
<keyword id="KW-0436">Ligase</keyword>
<keyword id="KW-0547">Nucleotide-binding</keyword>
<keyword id="KW-0554">One-carbon metabolism</keyword>
<keyword id="KW-1185">Reference proteome</keyword>
<gene>
    <name evidence="1" type="primary">fhs</name>
    <name type="ordered locus">RSal33209_1710</name>
</gene>
<sequence length="564" mass="59860">MTSTTEPMTDLHIAQQAVLHPIFDIADAAGIPEEALEQYGRYKAKVDVRKVPDSGRAGRVVLVTAVSPTPAGEGKSTTTVGLADSLNRAFEQEGTGRRSMIALREPSLGPTLGMKGGATGGGYSQVLPMDEINLHFTGDLHAINSANNALCALIDNHIYQGNVLNIDPRRITFKRVLDMNDRALREVVIGLGGPTQGVPRQDGFDITVASEIMAVFCLATDLNDLKSRIGKITFGYNYDRQPLTVAGLGVEGVLTLLLKEAIKPNLVQTLAGTAALVHGGPFANIAHGCNSVIATSLARRRADVVVTEAGFGADLGAEKYMDIKSRFADVAPSAVVIVATIRALKMHGGVPKTELSVSDVAALRRGVTNLARHISNVRQFGLDPVVSINRFTSDSEEELDWLVSWCESQGVSIAIADVWGRGGGGDDLAAKVLAALDAPSDFRHLYELELPVKEKIELIAQKIYGAERVEFSSSALKRIAEISANGWDSLPVCMAKTQYSFSDDASLLGAPSGFVLHVRDLVPKTGAGFIVALTGAVMTMPGLPKQPAALKMDVDAEGNSVGLS</sequence>
<proteinExistence type="inferred from homology"/>
<accession>A9WMW3</accession>
<feature type="chain" id="PRO_0000333316" description="Formate--tetrahydrofolate ligase">
    <location>
        <begin position="1"/>
        <end position="564"/>
    </location>
</feature>
<feature type="binding site" evidence="1">
    <location>
        <begin position="69"/>
        <end position="76"/>
    </location>
    <ligand>
        <name>ATP</name>
        <dbReference type="ChEBI" id="CHEBI:30616"/>
    </ligand>
</feature>
<name>FTHS_RENSM</name>